<name>RNH3_STAAW</name>
<reference key="1">
    <citation type="journal article" date="2002" name="Lancet">
        <title>Genome and virulence determinants of high virulence community-acquired MRSA.</title>
        <authorList>
            <person name="Baba T."/>
            <person name="Takeuchi F."/>
            <person name="Kuroda M."/>
            <person name="Yuzawa H."/>
            <person name="Aoki K."/>
            <person name="Oguchi A."/>
            <person name="Nagai Y."/>
            <person name="Iwama N."/>
            <person name="Asano K."/>
            <person name="Naimi T."/>
            <person name="Kuroda H."/>
            <person name="Cui L."/>
            <person name="Yamamoto K."/>
            <person name="Hiramatsu K."/>
        </authorList>
    </citation>
    <scope>NUCLEOTIDE SEQUENCE [LARGE SCALE GENOMIC DNA]</scope>
    <source>
        <strain>MW2</strain>
    </source>
</reference>
<organism>
    <name type="scientific">Staphylococcus aureus (strain MW2)</name>
    <dbReference type="NCBI Taxonomy" id="196620"/>
    <lineage>
        <taxon>Bacteria</taxon>
        <taxon>Bacillati</taxon>
        <taxon>Bacillota</taxon>
        <taxon>Bacilli</taxon>
        <taxon>Bacillales</taxon>
        <taxon>Staphylococcaceae</taxon>
        <taxon>Staphylococcus</taxon>
    </lineage>
</organism>
<sequence length="312" mass="35104">MANIVFKLSDKDITTLMSRITFDTENLPQGMKARAKYQNTTVNIYQSGKVMFQGNHAEAVSKELLPQHSQLNTNKTKKKNMANSFLEQTLMYDQFNCIGSDEAGSGDYFGPLTVCAAFVTKEHVPILKTLGVDDSKKLTDTKIVELAEQLVTFIPHSLLTLHNEKYNIQQAKGWTQVKMKAVLHNEAIKNVLEKIDSSQLDYIVIDQFAKREVYNHYALSDIPLPKKTKFETKGESKSLAIAVASIISRYAFVTYMDQISKNINMTIPKGAGAKVDVIAAKIIKKYGLSHLDTISKKHFKNREKAQKILKPL</sequence>
<evidence type="ECO:0000255" key="1">
    <source>
        <dbReference type="HAMAP-Rule" id="MF_00053"/>
    </source>
</evidence>
<evidence type="ECO:0000255" key="2">
    <source>
        <dbReference type="PROSITE-ProRule" id="PRU01319"/>
    </source>
</evidence>
<keyword id="KW-0963">Cytoplasm</keyword>
<keyword id="KW-0255">Endonuclease</keyword>
<keyword id="KW-0378">Hydrolase</keyword>
<keyword id="KW-0460">Magnesium</keyword>
<keyword id="KW-0479">Metal-binding</keyword>
<keyword id="KW-0540">Nuclease</keyword>
<gene>
    <name evidence="1" type="primary">rnhC</name>
    <name type="ordered locus">MW1023</name>
</gene>
<dbReference type="EC" id="3.1.26.4" evidence="1"/>
<dbReference type="EMBL" id="BA000033">
    <property type="protein sequence ID" value="BAB94888.1"/>
    <property type="molecule type" value="Genomic_DNA"/>
</dbReference>
<dbReference type="RefSeq" id="WP_001284280.1">
    <property type="nucleotide sequence ID" value="NC_003923.1"/>
</dbReference>
<dbReference type="SMR" id="Q8NX59"/>
<dbReference type="KEGG" id="sam:MW1023"/>
<dbReference type="HOGENOM" id="CLU_059546_1_0_9"/>
<dbReference type="GO" id="GO:0005737">
    <property type="term" value="C:cytoplasm"/>
    <property type="evidence" value="ECO:0007669"/>
    <property type="project" value="UniProtKB-SubCell"/>
</dbReference>
<dbReference type="GO" id="GO:0032299">
    <property type="term" value="C:ribonuclease H2 complex"/>
    <property type="evidence" value="ECO:0007669"/>
    <property type="project" value="TreeGrafter"/>
</dbReference>
<dbReference type="GO" id="GO:0000287">
    <property type="term" value="F:magnesium ion binding"/>
    <property type="evidence" value="ECO:0007669"/>
    <property type="project" value="UniProtKB-UniRule"/>
</dbReference>
<dbReference type="GO" id="GO:0003723">
    <property type="term" value="F:RNA binding"/>
    <property type="evidence" value="ECO:0007669"/>
    <property type="project" value="InterPro"/>
</dbReference>
<dbReference type="GO" id="GO:0004523">
    <property type="term" value="F:RNA-DNA hybrid ribonuclease activity"/>
    <property type="evidence" value="ECO:0007669"/>
    <property type="project" value="UniProtKB-UniRule"/>
</dbReference>
<dbReference type="GO" id="GO:0043137">
    <property type="term" value="P:DNA replication, removal of RNA primer"/>
    <property type="evidence" value="ECO:0007669"/>
    <property type="project" value="TreeGrafter"/>
</dbReference>
<dbReference type="GO" id="GO:0006298">
    <property type="term" value="P:mismatch repair"/>
    <property type="evidence" value="ECO:0007669"/>
    <property type="project" value="TreeGrafter"/>
</dbReference>
<dbReference type="CDD" id="cd06590">
    <property type="entry name" value="RNase_HII_bacteria_HIII_like"/>
    <property type="match status" value="1"/>
</dbReference>
<dbReference type="CDD" id="cd14796">
    <property type="entry name" value="RNAse_HIII_N"/>
    <property type="match status" value="1"/>
</dbReference>
<dbReference type="FunFam" id="3.30.420.10:FF:000047">
    <property type="entry name" value="Ribonuclease HIII"/>
    <property type="match status" value="1"/>
</dbReference>
<dbReference type="Gene3D" id="3.30.420.10">
    <property type="entry name" value="Ribonuclease H-like superfamily/Ribonuclease H"/>
    <property type="match status" value="1"/>
</dbReference>
<dbReference type="Gene3D" id="3.30.310.10">
    <property type="entry name" value="TATA-Binding Protein"/>
    <property type="match status" value="1"/>
</dbReference>
<dbReference type="HAMAP" id="MF_00053">
    <property type="entry name" value="RNase_HIII"/>
    <property type="match status" value="1"/>
</dbReference>
<dbReference type="InterPro" id="IPR001352">
    <property type="entry name" value="RNase_HII/HIII"/>
</dbReference>
<dbReference type="InterPro" id="IPR024567">
    <property type="entry name" value="RNase_HII/HIII_dom"/>
</dbReference>
<dbReference type="InterPro" id="IPR004641">
    <property type="entry name" value="RNase_HIII"/>
</dbReference>
<dbReference type="InterPro" id="IPR024568">
    <property type="entry name" value="RNase_HIII_N"/>
</dbReference>
<dbReference type="InterPro" id="IPR012337">
    <property type="entry name" value="RNaseH-like_sf"/>
</dbReference>
<dbReference type="InterPro" id="IPR036397">
    <property type="entry name" value="RNaseH_sf"/>
</dbReference>
<dbReference type="InterPro" id="IPR012295">
    <property type="entry name" value="TBP_dom_sf"/>
</dbReference>
<dbReference type="NCBIfam" id="TIGR00716">
    <property type="entry name" value="rnhC"/>
    <property type="match status" value="1"/>
</dbReference>
<dbReference type="PANTHER" id="PTHR10954:SF23">
    <property type="entry name" value="RIBONUCLEASE"/>
    <property type="match status" value="1"/>
</dbReference>
<dbReference type="PANTHER" id="PTHR10954">
    <property type="entry name" value="RIBONUCLEASE H2 SUBUNIT A"/>
    <property type="match status" value="1"/>
</dbReference>
<dbReference type="Pfam" id="PF11858">
    <property type="entry name" value="DUF3378"/>
    <property type="match status" value="1"/>
</dbReference>
<dbReference type="Pfam" id="PF01351">
    <property type="entry name" value="RNase_HII"/>
    <property type="match status" value="1"/>
</dbReference>
<dbReference type="PIRSF" id="PIRSF037748">
    <property type="entry name" value="RnhC"/>
    <property type="match status" value="1"/>
</dbReference>
<dbReference type="SUPFAM" id="SSF53098">
    <property type="entry name" value="Ribonuclease H-like"/>
    <property type="match status" value="1"/>
</dbReference>
<dbReference type="PROSITE" id="PS51975">
    <property type="entry name" value="RNASE_H_2"/>
    <property type="match status" value="1"/>
</dbReference>
<comment type="function">
    <text evidence="1">Endonuclease that specifically degrades the RNA of RNA-DNA hybrids.</text>
</comment>
<comment type="catalytic activity">
    <reaction evidence="1">
        <text>Endonucleolytic cleavage to 5'-phosphomonoester.</text>
        <dbReference type="EC" id="3.1.26.4"/>
    </reaction>
</comment>
<comment type="cofactor">
    <cofactor evidence="1">
        <name>Mn(2+)</name>
        <dbReference type="ChEBI" id="CHEBI:29035"/>
    </cofactor>
    <cofactor evidence="1">
        <name>Mg(2+)</name>
        <dbReference type="ChEBI" id="CHEBI:18420"/>
    </cofactor>
    <text evidence="1">Manganese or magnesium. Binds 1 divalent metal ion per monomer in the absence of substrate. May bind a second metal ion after substrate binding.</text>
</comment>
<comment type="subcellular location">
    <subcellularLocation>
        <location evidence="1">Cytoplasm</location>
    </subcellularLocation>
</comment>
<comment type="similarity">
    <text evidence="1">Belongs to the RNase HII family. RnhC subfamily.</text>
</comment>
<proteinExistence type="inferred from homology"/>
<accession>Q8NX59</accession>
<protein>
    <recommendedName>
        <fullName evidence="1">Ribonuclease HIII</fullName>
        <shortName evidence="1">RNase HIII</shortName>
        <ecNumber evidence="1">3.1.26.4</ecNumber>
    </recommendedName>
</protein>
<feature type="chain" id="PRO_0000111696" description="Ribonuclease HIII">
    <location>
        <begin position="1"/>
        <end position="312"/>
    </location>
</feature>
<feature type="domain" description="RNase H type-2" evidence="2">
    <location>
        <begin position="95"/>
        <end position="311"/>
    </location>
</feature>
<feature type="binding site" evidence="1">
    <location>
        <position position="101"/>
    </location>
    <ligand>
        <name>a divalent metal cation</name>
        <dbReference type="ChEBI" id="CHEBI:60240"/>
    </ligand>
</feature>
<feature type="binding site" evidence="1">
    <location>
        <position position="102"/>
    </location>
    <ligand>
        <name>a divalent metal cation</name>
        <dbReference type="ChEBI" id="CHEBI:60240"/>
    </ligand>
</feature>
<feature type="binding site" evidence="1">
    <location>
        <position position="206"/>
    </location>
    <ligand>
        <name>a divalent metal cation</name>
        <dbReference type="ChEBI" id="CHEBI:60240"/>
    </ligand>
</feature>